<keyword id="KW-0030">Aminoacyl-tRNA synthetase</keyword>
<keyword id="KW-0067">ATP-binding</keyword>
<keyword id="KW-0963">Cytoplasm</keyword>
<keyword id="KW-0436">Ligase</keyword>
<keyword id="KW-0547">Nucleotide-binding</keyword>
<keyword id="KW-0648">Protein biosynthesis</keyword>
<keyword id="KW-1185">Reference proteome</keyword>
<protein>
    <recommendedName>
        <fullName evidence="1">Aspartate--tRNA(Asp/Asn) ligase</fullName>
        <ecNumber evidence="1">6.1.1.23</ecNumber>
    </recommendedName>
    <alternativeName>
        <fullName evidence="1">Aspartyl-tRNA synthetase</fullName>
        <shortName evidence="1">AspRS</shortName>
    </alternativeName>
    <alternativeName>
        <fullName evidence="1">Non-discriminating aspartyl-tRNA synthetase</fullName>
        <shortName evidence="1">ND-AspRS</shortName>
    </alternativeName>
</protein>
<proteinExistence type="inferred from homology"/>
<name>SYDND_HELPG</name>
<gene>
    <name evidence="1" type="primary">aspS</name>
    <name type="ordered locus">HPG27_577</name>
</gene>
<feature type="chain" id="PRO_1000090999" description="Aspartate--tRNA(Asp/Asn) ligase">
    <location>
        <begin position="1"/>
        <end position="577"/>
    </location>
</feature>
<feature type="region of interest" description="Aspartate" evidence="1">
    <location>
        <begin position="195"/>
        <end position="198"/>
    </location>
</feature>
<feature type="binding site" evidence="1">
    <location>
        <position position="171"/>
    </location>
    <ligand>
        <name>L-aspartate</name>
        <dbReference type="ChEBI" id="CHEBI:29991"/>
    </ligand>
</feature>
<feature type="binding site" evidence="1">
    <location>
        <begin position="217"/>
        <end position="219"/>
    </location>
    <ligand>
        <name>ATP</name>
        <dbReference type="ChEBI" id="CHEBI:30616"/>
    </ligand>
</feature>
<feature type="binding site" evidence="1">
    <location>
        <position position="217"/>
    </location>
    <ligand>
        <name>L-aspartate</name>
        <dbReference type="ChEBI" id="CHEBI:29991"/>
    </ligand>
</feature>
<feature type="binding site" evidence="1">
    <location>
        <position position="226"/>
    </location>
    <ligand>
        <name>ATP</name>
        <dbReference type="ChEBI" id="CHEBI:30616"/>
    </ligand>
</feature>
<feature type="binding site" evidence="1">
    <location>
        <position position="444"/>
    </location>
    <ligand>
        <name>L-aspartate</name>
        <dbReference type="ChEBI" id="CHEBI:29991"/>
    </ligand>
</feature>
<feature type="binding site" evidence="1">
    <location>
        <position position="474"/>
    </location>
    <ligand>
        <name>ATP</name>
        <dbReference type="ChEBI" id="CHEBI:30616"/>
    </ligand>
</feature>
<feature type="binding site" evidence="1">
    <location>
        <position position="481"/>
    </location>
    <ligand>
        <name>L-aspartate</name>
        <dbReference type="ChEBI" id="CHEBI:29991"/>
    </ligand>
</feature>
<feature type="binding site" evidence="1">
    <location>
        <begin position="526"/>
        <end position="529"/>
    </location>
    <ligand>
        <name>ATP</name>
        <dbReference type="ChEBI" id="CHEBI:30616"/>
    </ligand>
</feature>
<feature type="site" description="Important for tRNA non-discrimination" evidence="1">
    <location>
        <position position="30"/>
    </location>
</feature>
<feature type="site" description="Important for tRNA non-discrimination" evidence="1">
    <location>
        <position position="80"/>
    </location>
</feature>
<dbReference type="EC" id="6.1.1.23" evidence="1"/>
<dbReference type="EMBL" id="CP001173">
    <property type="protein sequence ID" value="ACI27337.1"/>
    <property type="molecule type" value="Genomic_DNA"/>
</dbReference>
<dbReference type="RefSeq" id="WP_001256447.1">
    <property type="nucleotide sequence ID" value="NC_011333.1"/>
</dbReference>
<dbReference type="SMR" id="B5Z6Y8"/>
<dbReference type="KEGG" id="hpg:HPG27_577"/>
<dbReference type="HOGENOM" id="CLU_014330_3_2_7"/>
<dbReference type="Proteomes" id="UP000001735">
    <property type="component" value="Chromosome"/>
</dbReference>
<dbReference type="GO" id="GO:0005737">
    <property type="term" value="C:cytoplasm"/>
    <property type="evidence" value="ECO:0007669"/>
    <property type="project" value="UniProtKB-SubCell"/>
</dbReference>
<dbReference type="GO" id="GO:0004815">
    <property type="term" value="F:aspartate-tRNA ligase activity"/>
    <property type="evidence" value="ECO:0007669"/>
    <property type="project" value="UniProtKB-UniRule"/>
</dbReference>
<dbReference type="GO" id="GO:0050560">
    <property type="term" value="F:aspartate-tRNA(Asn) ligase activity"/>
    <property type="evidence" value="ECO:0007669"/>
    <property type="project" value="UniProtKB-EC"/>
</dbReference>
<dbReference type="GO" id="GO:0005524">
    <property type="term" value="F:ATP binding"/>
    <property type="evidence" value="ECO:0007669"/>
    <property type="project" value="UniProtKB-UniRule"/>
</dbReference>
<dbReference type="GO" id="GO:0003676">
    <property type="term" value="F:nucleic acid binding"/>
    <property type="evidence" value="ECO:0007669"/>
    <property type="project" value="InterPro"/>
</dbReference>
<dbReference type="GO" id="GO:0006422">
    <property type="term" value="P:aspartyl-tRNA aminoacylation"/>
    <property type="evidence" value="ECO:0007669"/>
    <property type="project" value="UniProtKB-UniRule"/>
</dbReference>
<dbReference type="CDD" id="cd00777">
    <property type="entry name" value="AspRS_core"/>
    <property type="match status" value="1"/>
</dbReference>
<dbReference type="CDD" id="cd04317">
    <property type="entry name" value="EcAspRS_like_N"/>
    <property type="match status" value="1"/>
</dbReference>
<dbReference type="Gene3D" id="3.30.930.10">
    <property type="entry name" value="Bira Bifunctional Protein, Domain 2"/>
    <property type="match status" value="1"/>
</dbReference>
<dbReference type="Gene3D" id="3.30.1360.30">
    <property type="entry name" value="GAD-like domain"/>
    <property type="match status" value="1"/>
</dbReference>
<dbReference type="Gene3D" id="2.40.50.140">
    <property type="entry name" value="Nucleic acid-binding proteins"/>
    <property type="match status" value="1"/>
</dbReference>
<dbReference type="HAMAP" id="MF_00044">
    <property type="entry name" value="Asp_tRNA_synth_type1"/>
    <property type="match status" value="1"/>
</dbReference>
<dbReference type="InterPro" id="IPR004364">
    <property type="entry name" value="Aa-tRNA-synt_II"/>
</dbReference>
<dbReference type="InterPro" id="IPR006195">
    <property type="entry name" value="aa-tRNA-synth_II"/>
</dbReference>
<dbReference type="InterPro" id="IPR045864">
    <property type="entry name" value="aa-tRNA-synth_II/BPL/LPL"/>
</dbReference>
<dbReference type="InterPro" id="IPR004524">
    <property type="entry name" value="Asp-tRNA-ligase_1"/>
</dbReference>
<dbReference type="InterPro" id="IPR047089">
    <property type="entry name" value="Asp-tRNA-ligase_1_N"/>
</dbReference>
<dbReference type="InterPro" id="IPR002312">
    <property type="entry name" value="Asp/Asn-tRNA-synth_IIb"/>
</dbReference>
<dbReference type="InterPro" id="IPR047090">
    <property type="entry name" value="AspRS_core"/>
</dbReference>
<dbReference type="InterPro" id="IPR004115">
    <property type="entry name" value="GAD-like_sf"/>
</dbReference>
<dbReference type="InterPro" id="IPR029351">
    <property type="entry name" value="GAD_dom"/>
</dbReference>
<dbReference type="InterPro" id="IPR012340">
    <property type="entry name" value="NA-bd_OB-fold"/>
</dbReference>
<dbReference type="InterPro" id="IPR004365">
    <property type="entry name" value="NA-bd_OB_tRNA"/>
</dbReference>
<dbReference type="NCBIfam" id="TIGR00459">
    <property type="entry name" value="aspS_bact"/>
    <property type="match status" value="1"/>
</dbReference>
<dbReference type="NCBIfam" id="NF001750">
    <property type="entry name" value="PRK00476.1"/>
    <property type="match status" value="1"/>
</dbReference>
<dbReference type="PANTHER" id="PTHR22594:SF5">
    <property type="entry name" value="ASPARTATE--TRNA LIGASE, MITOCHONDRIAL"/>
    <property type="match status" value="1"/>
</dbReference>
<dbReference type="PANTHER" id="PTHR22594">
    <property type="entry name" value="ASPARTYL/LYSYL-TRNA SYNTHETASE"/>
    <property type="match status" value="1"/>
</dbReference>
<dbReference type="Pfam" id="PF02938">
    <property type="entry name" value="GAD"/>
    <property type="match status" value="1"/>
</dbReference>
<dbReference type="Pfam" id="PF00152">
    <property type="entry name" value="tRNA-synt_2"/>
    <property type="match status" value="1"/>
</dbReference>
<dbReference type="Pfam" id="PF01336">
    <property type="entry name" value="tRNA_anti-codon"/>
    <property type="match status" value="1"/>
</dbReference>
<dbReference type="PRINTS" id="PR01042">
    <property type="entry name" value="TRNASYNTHASP"/>
</dbReference>
<dbReference type="SUPFAM" id="SSF55681">
    <property type="entry name" value="Class II aaRS and biotin synthetases"/>
    <property type="match status" value="1"/>
</dbReference>
<dbReference type="SUPFAM" id="SSF55261">
    <property type="entry name" value="GAD domain-like"/>
    <property type="match status" value="1"/>
</dbReference>
<dbReference type="SUPFAM" id="SSF50249">
    <property type="entry name" value="Nucleic acid-binding proteins"/>
    <property type="match status" value="1"/>
</dbReference>
<dbReference type="PROSITE" id="PS50862">
    <property type="entry name" value="AA_TRNA_LIGASE_II"/>
    <property type="match status" value="1"/>
</dbReference>
<reference key="1">
    <citation type="journal article" date="2009" name="J. Bacteriol.">
        <title>The complete genome sequence of Helicobacter pylori strain G27.</title>
        <authorList>
            <person name="Baltrus D.A."/>
            <person name="Amieva M.R."/>
            <person name="Covacci A."/>
            <person name="Lowe T.M."/>
            <person name="Merrell D.S."/>
            <person name="Ottemann K.M."/>
            <person name="Stein M."/>
            <person name="Salama N.R."/>
            <person name="Guillemin K."/>
        </authorList>
    </citation>
    <scope>NUCLEOTIDE SEQUENCE [LARGE SCALE GENOMIC DNA]</scope>
    <source>
        <strain>G27</strain>
    </source>
</reference>
<comment type="function">
    <text evidence="1">Aspartyl-tRNA synthetase with relaxed tRNA specificity since it is able to aspartylate not only its cognate tRNA(Asp) but also tRNA(Asn). Reaction proceeds in two steps: L-aspartate is first activated by ATP to form Asp-AMP and then transferred to the acceptor end of tRNA(Asp/Asn).</text>
</comment>
<comment type="catalytic activity">
    <reaction evidence="1">
        <text>tRNA(Asx) + L-aspartate + ATP = L-aspartyl-tRNA(Asx) + AMP + diphosphate</text>
        <dbReference type="Rhea" id="RHEA:18349"/>
        <dbReference type="Rhea" id="RHEA-COMP:9710"/>
        <dbReference type="Rhea" id="RHEA-COMP:9711"/>
        <dbReference type="ChEBI" id="CHEBI:29991"/>
        <dbReference type="ChEBI" id="CHEBI:30616"/>
        <dbReference type="ChEBI" id="CHEBI:33019"/>
        <dbReference type="ChEBI" id="CHEBI:78442"/>
        <dbReference type="ChEBI" id="CHEBI:78516"/>
        <dbReference type="ChEBI" id="CHEBI:456215"/>
        <dbReference type="EC" id="6.1.1.23"/>
    </reaction>
</comment>
<comment type="subunit">
    <text evidence="1">Homodimer.</text>
</comment>
<comment type="subcellular location">
    <subcellularLocation>
        <location evidence="1">Cytoplasm</location>
    </subcellularLocation>
</comment>
<comment type="similarity">
    <text evidence="1">Belongs to the class-II aminoacyl-tRNA synthetase family. Type 1 subfamily.</text>
</comment>
<organism>
    <name type="scientific">Helicobacter pylori (strain G27)</name>
    <dbReference type="NCBI Taxonomy" id="563041"/>
    <lineage>
        <taxon>Bacteria</taxon>
        <taxon>Pseudomonadati</taxon>
        <taxon>Campylobacterota</taxon>
        <taxon>Epsilonproteobacteria</taxon>
        <taxon>Campylobacterales</taxon>
        <taxon>Helicobacteraceae</taxon>
        <taxon>Helicobacter</taxon>
    </lineage>
</organism>
<evidence type="ECO:0000255" key="1">
    <source>
        <dbReference type="HAMAP-Rule" id="MF_00044"/>
    </source>
</evidence>
<accession>B5Z6Y8</accession>
<sequence>MRSHFCTEISEKDVGKTIKVAGWCNTYRDHGGVVFIDLRDKSGLVQLVCDPSSKAYEKALEVRSEFVLVAKGKARLRGPGLENPKLKTGKIEIVLEELVIENKSATPPIEIGNKSVNEDLRLKYRYLDLRSPNSYEIFKLRSEVALITRNTLAQKGFLEIETPILSKTTPEGARDYLVPSRVHEGEFFALPQSPQLFKQLLMVGGMDRYFQIARCFRDEDLRADRQPEFTQIDAEMSFCDENDVMGVVEDLLQAIFKAIGHTISKPFKRMPYKEAMENYGSDKPDLRFKLPLIEVGDCFMDSSNAIFSNIAKDPKNKRIKALNVKGADALFSRSVLKELEEFVRQFGAKGLAYLQIKEDGIKGPLVKFLSEKGLKNILEKTGAKTGDIVFFGAGDKKIVLDYMGRLRLKVAETLDLIDKDALNFLWVVNFPMFEKTENGYHAAHHPFTMPKNIECEDIEEIEAHAYDVVLNGVELGGGSIRIHKEEMQKKVFEKINIHEEEAQKKFGFLLEALKFGAPPHGGFAIGFDRLIMLMTKSHSIRDVIAFPKTQKASCLLTNAPSPINEEQLRELHIRLRK</sequence>